<sequence length="343" mass="37540">MGGPRGAGWVAAGLLLGAGACYCIYRLTRGRRRGDRELGIRSSKSAGALEEGTSEGQLCGRSARPQTGGTWESQWSKTSQPEDLTDGSYDDVLNAEQLQKLLYLLESTEDPVIIERALITLGNNAAFSVNQAIIRELGGIPIVANKINHSNQSIKEKALNALNNLSVNVENQIKIKIYISQVCEDVFSGPLNSAVQLAGLTLLTNMTVTNDHQHMLHSYITDLFQVLLTGNGNTKVQVLKLLLNLSENPAMTEGLLRAQVDSSFLSLYDSHVAKEILLRVLTLFQNIKNCLKIEGHLAVQPTFTEGSLFFLLHGEECAQKIRALVDHHDAEVKEKVVTIIPKI</sequence>
<reference key="1">
    <citation type="journal article" date="2003" name="Cancer Res.">
        <title>A specific splicing variant of SVH, a novel human armadillo repeat protein, is up-regulated in hepatocellular carcinomas.</title>
        <authorList>
            <person name="Huang R."/>
            <person name="Xing Z."/>
            <person name="Luan Z."/>
            <person name="Wu T."/>
            <person name="Wu X."/>
            <person name="Hu G."/>
        </authorList>
    </citation>
    <scope>NUCLEOTIDE SEQUENCE [MRNA] (ISOFORMS 1; 2; 3 AND 4)</scope>
    <scope>FUNCTION</scope>
    <scope>SUBCELLULAR LOCATION</scope>
    <scope>TISSUE SPECIFICITY</scope>
    <source>
        <tissue>Hepatoma</tissue>
    </source>
</reference>
<reference key="2">
    <citation type="journal article" date="2005" name="DNA Res.">
        <title>Signal sequence and keyword trap in silico for selection of full-length human cDNAs encoding secretion or membrane proteins from oligo-capped cDNA libraries.</title>
        <authorList>
            <person name="Otsuki T."/>
            <person name="Ota T."/>
            <person name="Nishikawa T."/>
            <person name="Hayashi K."/>
            <person name="Suzuki Y."/>
            <person name="Yamamoto J."/>
            <person name="Wakamatsu A."/>
            <person name="Kimura K."/>
            <person name="Sakamoto K."/>
            <person name="Hatano N."/>
            <person name="Kawai Y."/>
            <person name="Ishii S."/>
            <person name="Saito K."/>
            <person name="Kojima S."/>
            <person name="Sugiyama T."/>
            <person name="Ono T."/>
            <person name="Okano K."/>
            <person name="Yoshikawa Y."/>
            <person name="Aotsuka S."/>
            <person name="Sasaki N."/>
            <person name="Hattori A."/>
            <person name="Okumura K."/>
            <person name="Nagai K."/>
            <person name="Sugano S."/>
            <person name="Isogai T."/>
        </authorList>
    </citation>
    <scope>NUCLEOTIDE SEQUENCE [LARGE SCALE MRNA] (ISOFORM 1)</scope>
    <source>
        <tissue>Embryo</tissue>
    </source>
</reference>
<reference key="3">
    <citation type="journal article" date="2004" name="Nat. Genet.">
        <title>Complete sequencing and characterization of 21,243 full-length human cDNAs.</title>
        <authorList>
            <person name="Ota T."/>
            <person name="Suzuki Y."/>
            <person name="Nishikawa T."/>
            <person name="Otsuki T."/>
            <person name="Sugiyama T."/>
            <person name="Irie R."/>
            <person name="Wakamatsu A."/>
            <person name="Hayashi K."/>
            <person name="Sato H."/>
            <person name="Nagai K."/>
            <person name="Kimura K."/>
            <person name="Makita H."/>
            <person name="Sekine M."/>
            <person name="Obayashi M."/>
            <person name="Nishi T."/>
            <person name="Shibahara T."/>
            <person name="Tanaka T."/>
            <person name="Ishii S."/>
            <person name="Yamamoto J."/>
            <person name="Saito K."/>
            <person name="Kawai Y."/>
            <person name="Isono Y."/>
            <person name="Nakamura Y."/>
            <person name="Nagahari K."/>
            <person name="Murakami K."/>
            <person name="Yasuda T."/>
            <person name="Iwayanagi T."/>
            <person name="Wagatsuma M."/>
            <person name="Shiratori A."/>
            <person name="Sudo H."/>
            <person name="Hosoiri T."/>
            <person name="Kaku Y."/>
            <person name="Kodaira H."/>
            <person name="Kondo H."/>
            <person name="Sugawara M."/>
            <person name="Takahashi M."/>
            <person name="Kanda K."/>
            <person name="Yokoi T."/>
            <person name="Furuya T."/>
            <person name="Kikkawa E."/>
            <person name="Omura Y."/>
            <person name="Abe K."/>
            <person name="Kamihara K."/>
            <person name="Katsuta N."/>
            <person name="Sato K."/>
            <person name="Tanikawa M."/>
            <person name="Yamazaki M."/>
            <person name="Ninomiya K."/>
            <person name="Ishibashi T."/>
            <person name="Yamashita H."/>
            <person name="Murakawa K."/>
            <person name="Fujimori K."/>
            <person name="Tanai H."/>
            <person name="Kimata M."/>
            <person name="Watanabe M."/>
            <person name="Hiraoka S."/>
            <person name="Chiba Y."/>
            <person name="Ishida S."/>
            <person name="Ono Y."/>
            <person name="Takiguchi S."/>
            <person name="Watanabe S."/>
            <person name="Yosida M."/>
            <person name="Hotuta T."/>
            <person name="Kusano J."/>
            <person name="Kanehori K."/>
            <person name="Takahashi-Fujii A."/>
            <person name="Hara H."/>
            <person name="Tanase T.-O."/>
            <person name="Nomura Y."/>
            <person name="Togiya S."/>
            <person name="Komai F."/>
            <person name="Hara R."/>
            <person name="Takeuchi K."/>
            <person name="Arita M."/>
            <person name="Imose N."/>
            <person name="Musashino K."/>
            <person name="Yuuki H."/>
            <person name="Oshima A."/>
            <person name="Sasaki N."/>
            <person name="Aotsuka S."/>
            <person name="Yoshikawa Y."/>
            <person name="Matsunawa H."/>
            <person name="Ichihara T."/>
            <person name="Shiohata N."/>
            <person name="Sano S."/>
            <person name="Moriya S."/>
            <person name="Momiyama H."/>
            <person name="Satoh N."/>
            <person name="Takami S."/>
            <person name="Terashima Y."/>
            <person name="Suzuki O."/>
            <person name="Nakagawa S."/>
            <person name="Senoh A."/>
            <person name="Mizoguchi H."/>
            <person name="Goto Y."/>
            <person name="Shimizu F."/>
            <person name="Wakebe H."/>
            <person name="Hishigaki H."/>
            <person name="Watanabe T."/>
            <person name="Sugiyama A."/>
            <person name="Takemoto M."/>
            <person name="Kawakami B."/>
            <person name="Yamazaki M."/>
            <person name="Watanabe K."/>
            <person name="Kumagai A."/>
            <person name="Itakura S."/>
            <person name="Fukuzumi Y."/>
            <person name="Fujimori Y."/>
            <person name="Komiyama M."/>
            <person name="Tashiro H."/>
            <person name="Tanigami A."/>
            <person name="Fujiwara T."/>
            <person name="Ono T."/>
            <person name="Yamada K."/>
            <person name="Fujii Y."/>
            <person name="Ozaki K."/>
            <person name="Hirao M."/>
            <person name="Ohmori Y."/>
            <person name="Kawabata A."/>
            <person name="Hikiji T."/>
            <person name="Kobatake N."/>
            <person name="Inagaki H."/>
            <person name="Ikema Y."/>
            <person name="Okamoto S."/>
            <person name="Okitani R."/>
            <person name="Kawakami T."/>
            <person name="Noguchi S."/>
            <person name="Itoh T."/>
            <person name="Shigeta K."/>
            <person name="Senba T."/>
            <person name="Matsumura K."/>
            <person name="Nakajima Y."/>
            <person name="Mizuno T."/>
            <person name="Morinaga M."/>
            <person name="Sasaki M."/>
            <person name="Togashi T."/>
            <person name="Oyama M."/>
            <person name="Hata H."/>
            <person name="Watanabe M."/>
            <person name="Komatsu T."/>
            <person name="Mizushima-Sugano J."/>
            <person name="Satoh T."/>
            <person name="Shirai Y."/>
            <person name="Takahashi Y."/>
            <person name="Nakagawa K."/>
            <person name="Okumura K."/>
            <person name="Nagase T."/>
            <person name="Nomura N."/>
            <person name="Kikuchi H."/>
            <person name="Masuho Y."/>
            <person name="Yamashita R."/>
            <person name="Nakai K."/>
            <person name="Yada T."/>
            <person name="Nakamura Y."/>
            <person name="Ohara O."/>
            <person name="Isogai T."/>
            <person name="Sugano S."/>
        </authorList>
    </citation>
    <scope>NUCLEOTIDE SEQUENCE [LARGE SCALE MRNA] (ISOFORMS 2 AND 5)</scope>
    <source>
        <tissue>Mammary gland</tissue>
        <tissue>Prostate</tissue>
    </source>
</reference>
<reference key="4">
    <citation type="journal article" date="2003" name="Nature">
        <title>The DNA sequence of human chromosome 7.</title>
        <authorList>
            <person name="Hillier L.W."/>
            <person name="Fulton R.S."/>
            <person name="Fulton L.A."/>
            <person name="Graves T.A."/>
            <person name="Pepin K.H."/>
            <person name="Wagner-McPherson C."/>
            <person name="Layman D."/>
            <person name="Maas J."/>
            <person name="Jaeger S."/>
            <person name="Walker R."/>
            <person name="Wylie K."/>
            <person name="Sekhon M."/>
            <person name="Becker M.C."/>
            <person name="O'Laughlin M.D."/>
            <person name="Schaller M.E."/>
            <person name="Fewell G.A."/>
            <person name="Delehaunty K.D."/>
            <person name="Miner T.L."/>
            <person name="Nash W.E."/>
            <person name="Cordes M."/>
            <person name="Du H."/>
            <person name="Sun H."/>
            <person name="Edwards J."/>
            <person name="Bradshaw-Cordum H."/>
            <person name="Ali J."/>
            <person name="Andrews S."/>
            <person name="Isak A."/>
            <person name="Vanbrunt A."/>
            <person name="Nguyen C."/>
            <person name="Du F."/>
            <person name="Lamar B."/>
            <person name="Courtney L."/>
            <person name="Kalicki J."/>
            <person name="Ozersky P."/>
            <person name="Bielicki L."/>
            <person name="Scott K."/>
            <person name="Holmes A."/>
            <person name="Harkins R."/>
            <person name="Harris A."/>
            <person name="Strong C.M."/>
            <person name="Hou S."/>
            <person name="Tomlinson C."/>
            <person name="Dauphin-Kohlberg S."/>
            <person name="Kozlowicz-Reilly A."/>
            <person name="Leonard S."/>
            <person name="Rohlfing T."/>
            <person name="Rock S.M."/>
            <person name="Tin-Wollam A.-M."/>
            <person name="Abbott A."/>
            <person name="Minx P."/>
            <person name="Maupin R."/>
            <person name="Strowmatt C."/>
            <person name="Latreille P."/>
            <person name="Miller N."/>
            <person name="Johnson D."/>
            <person name="Murray J."/>
            <person name="Woessner J.P."/>
            <person name="Wendl M.C."/>
            <person name="Yang S.-P."/>
            <person name="Schultz B.R."/>
            <person name="Wallis J.W."/>
            <person name="Spieth J."/>
            <person name="Bieri T.A."/>
            <person name="Nelson J.O."/>
            <person name="Berkowicz N."/>
            <person name="Wohldmann P.E."/>
            <person name="Cook L.L."/>
            <person name="Hickenbotham M.T."/>
            <person name="Eldred J."/>
            <person name="Williams D."/>
            <person name="Bedell J.A."/>
            <person name="Mardis E.R."/>
            <person name="Clifton S.W."/>
            <person name="Chissoe S.L."/>
            <person name="Marra M.A."/>
            <person name="Raymond C."/>
            <person name="Haugen E."/>
            <person name="Gillett W."/>
            <person name="Zhou Y."/>
            <person name="James R."/>
            <person name="Phelps K."/>
            <person name="Iadanoto S."/>
            <person name="Bubb K."/>
            <person name="Simms E."/>
            <person name="Levy R."/>
            <person name="Clendenning J."/>
            <person name="Kaul R."/>
            <person name="Kent W.J."/>
            <person name="Furey T.S."/>
            <person name="Baertsch R.A."/>
            <person name="Brent M.R."/>
            <person name="Keibler E."/>
            <person name="Flicek P."/>
            <person name="Bork P."/>
            <person name="Suyama M."/>
            <person name="Bailey J.A."/>
            <person name="Portnoy M.E."/>
            <person name="Torrents D."/>
            <person name="Chinwalla A.T."/>
            <person name="Gish W.R."/>
            <person name="Eddy S.R."/>
            <person name="McPherson J.D."/>
            <person name="Olson M.V."/>
            <person name="Eichler E.E."/>
            <person name="Green E.D."/>
            <person name="Waterston R.H."/>
            <person name="Wilson R.K."/>
        </authorList>
    </citation>
    <scope>NUCLEOTIDE SEQUENCE [LARGE SCALE GENOMIC DNA]</scope>
</reference>
<reference key="5">
    <citation type="journal article" date="2004" name="Genome Res.">
        <title>The status, quality, and expansion of the NIH full-length cDNA project: the Mammalian Gene Collection (MGC).</title>
        <authorList>
            <consortium name="The MGC Project Team"/>
        </authorList>
    </citation>
    <scope>NUCLEOTIDE SEQUENCE [LARGE SCALE MRNA] (ISOFORM 2)</scope>
    <scope>VARIANT SER-190</scope>
    <source>
        <tissue>Eye</tissue>
    </source>
</reference>
<reference key="6">
    <citation type="journal article" date="2007" name="FEBS Lett.">
        <title>SVH-B interacts directly with p53 and suppresses the transcriptional activity of p53.</title>
        <authorList>
            <person name="Zhou X."/>
            <person name="Yang G."/>
            <person name="Huang R."/>
            <person name="Chen X."/>
            <person name="Hu G."/>
        </authorList>
    </citation>
    <scope>PROTEIN SEQUENCE OF 45-100 (ISOFORM 2)</scope>
    <scope>INTERACTION WITH TP53</scope>
    <scope>FUNCTION</scope>
</reference>
<reference key="7">
    <citation type="journal article" date="2008" name="Proc. Natl. Acad. Sci. U.S.A.">
        <title>A quantitative atlas of mitotic phosphorylation.</title>
        <authorList>
            <person name="Dephoure N."/>
            <person name="Zhou C."/>
            <person name="Villen J."/>
            <person name="Beausoleil S.A."/>
            <person name="Bakalarski C.E."/>
            <person name="Elledge S.J."/>
            <person name="Gygi S.P."/>
        </authorList>
    </citation>
    <scope>PHOSPHORYLATION [LARGE SCALE ANALYSIS] AT SER-45 (ISOFORMS 2; 4; 5 AND 6)</scope>
    <scope>IDENTIFICATION BY MASS SPECTROMETRY [LARGE SCALE ANALYSIS]</scope>
    <source>
        <tissue>Cervix carcinoma</tissue>
    </source>
</reference>
<reference key="8">
    <citation type="journal article" date="2008" name="Proteomics">
        <title>Large-scale phosphoproteome analysis of human liver tissue by enrichment and fractionation of phosphopeptides with strong anion exchange chromatography.</title>
        <authorList>
            <person name="Han G."/>
            <person name="Ye M."/>
            <person name="Zhou H."/>
            <person name="Jiang X."/>
            <person name="Feng S."/>
            <person name="Jiang X."/>
            <person name="Tian R."/>
            <person name="Wan D."/>
            <person name="Zou H."/>
            <person name="Gu J."/>
        </authorList>
    </citation>
    <scope>PHOSPHORYLATION [LARGE SCALE ANALYSIS] AT SER-45 (ISOFORMS 2; 4; 5 AND 6)</scope>
    <scope>IDENTIFICATION BY MASS SPECTROMETRY [LARGE SCALE ANALYSIS]</scope>
    <source>
        <tissue>Liver</tissue>
    </source>
</reference>
<reference key="9">
    <citation type="journal article" date="2009" name="Sci. Signal.">
        <title>Quantitative phosphoproteomic analysis of T cell receptor signaling reveals system-wide modulation of protein-protein interactions.</title>
        <authorList>
            <person name="Mayya V."/>
            <person name="Lundgren D.H."/>
            <person name="Hwang S.-I."/>
            <person name="Rezaul K."/>
            <person name="Wu L."/>
            <person name="Eng J.K."/>
            <person name="Rodionov V."/>
            <person name="Han D.K."/>
        </authorList>
    </citation>
    <scope>PHOSPHORYLATION [LARGE SCALE ANALYSIS] AT SER-45 AND THR-50 (ISOFORMS 2; 4; 5 AND 6)</scope>
    <scope>IDENTIFICATION BY MASS SPECTROMETRY [LARGE SCALE ANALYSIS]</scope>
    <source>
        <tissue>Leukemic T-cell</tissue>
    </source>
</reference>
<reference key="10">
    <citation type="journal article" date="2010" name="Sci. Signal.">
        <title>Quantitative phosphoproteomics reveals widespread full phosphorylation site occupancy during mitosis.</title>
        <authorList>
            <person name="Olsen J.V."/>
            <person name="Vermeulen M."/>
            <person name="Santamaria A."/>
            <person name="Kumar C."/>
            <person name="Miller M.L."/>
            <person name="Jensen L.J."/>
            <person name="Gnad F."/>
            <person name="Cox J."/>
            <person name="Jensen T.S."/>
            <person name="Nigg E.A."/>
            <person name="Brunak S."/>
            <person name="Mann M."/>
        </authorList>
    </citation>
    <scope>IDENTIFICATION BY MASS SPECTROMETRY [LARGE SCALE ANALYSIS]</scope>
    <source>
        <tissue>Cervix carcinoma</tissue>
    </source>
</reference>
<reference key="11">
    <citation type="journal article" date="2011" name="BMC Syst. Biol.">
        <title>Initial characterization of the human central proteome.</title>
        <authorList>
            <person name="Burkard T.R."/>
            <person name="Planyavsky M."/>
            <person name="Kaupe I."/>
            <person name="Breitwieser F.P."/>
            <person name="Buerckstuemmer T."/>
            <person name="Bennett K.L."/>
            <person name="Superti-Furga G."/>
            <person name="Colinge J."/>
        </authorList>
    </citation>
    <scope>IDENTIFICATION BY MASS SPECTROMETRY [LARGE SCALE ANALYSIS]</scope>
</reference>
<reference key="12">
    <citation type="journal article" date="2011" name="Sci. Signal.">
        <title>System-wide temporal characterization of the proteome and phosphoproteome of human embryonic stem cell differentiation.</title>
        <authorList>
            <person name="Rigbolt K.T."/>
            <person name="Prokhorova T.A."/>
            <person name="Akimov V."/>
            <person name="Henningsen J."/>
            <person name="Johansen P.T."/>
            <person name="Kratchmarova I."/>
            <person name="Kassem M."/>
            <person name="Mann M."/>
            <person name="Olsen J.V."/>
            <person name="Blagoev B."/>
        </authorList>
    </citation>
    <scope>PHOSPHORYLATION [LARGE SCALE ANALYSIS] AT SER-45 (ISOFORMS 2; 4; 5 AND 6)</scope>
    <scope>IDENTIFICATION BY MASS SPECTROMETRY [LARGE SCALE ANALYSIS]</scope>
</reference>
<reference key="13">
    <citation type="journal article" date="2013" name="J. Proteome Res.">
        <title>Toward a comprehensive characterization of a human cancer cell phosphoproteome.</title>
        <authorList>
            <person name="Zhou H."/>
            <person name="Di Palma S."/>
            <person name="Preisinger C."/>
            <person name="Peng M."/>
            <person name="Polat A.N."/>
            <person name="Heck A.J."/>
            <person name="Mohammed S."/>
        </authorList>
    </citation>
    <scope>PHOSPHORYLATION [LARGE SCALE ANALYSIS] AT SER-45</scope>
    <scope>IDENTIFICATION BY MASS SPECTROMETRY [LARGE SCALE ANALYSIS]</scope>
    <source>
        <tissue>Cervix carcinoma</tissue>
        <tissue>Erythroleukemia</tissue>
    </source>
</reference>
<reference key="14">
    <citation type="journal article" date="2014" name="J. Proteomics">
        <title>An enzyme assisted RP-RPLC approach for in-depth analysis of human liver phosphoproteome.</title>
        <authorList>
            <person name="Bian Y."/>
            <person name="Song C."/>
            <person name="Cheng K."/>
            <person name="Dong M."/>
            <person name="Wang F."/>
            <person name="Huang J."/>
            <person name="Sun D."/>
            <person name="Wang L."/>
            <person name="Ye M."/>
            <person name="Zou H."/>
        </authorList>
    </citation>
    <scope>PHOSPHORYLATION [LARGE SCALE ANALYSIS] AT SER-45 (ISOFORMS 2; 4; 5 AND 6)</scope>
    <scope>IDENTIFICATION BY MASS SPECTROMETRY [LARGE SCALE ANALYSIS]</scope>
    <source>
        <tissue>Liver</tissue>
    </source>
</reference>
<reference key="15">
    <citation type="journal article" date="2015" name="Proteomics">
        <title>N-terminome analysis of the human mitochondrial proteome.</title>
        <authorList>
            <person name="Vaca Jacome A.S."/>
            <person name="Rabilloud T."/>
            <person name="Schaeffer-Reiss C."/>
            <person name="Rompais M."/>
            <person name="Ayoub D."/>
            <person name="Lane L."/>
            <person name="Bairoch A."/>
            <person name="Van Dorsselaer A."/>
            <person name="Carapito C."/>
        </authorList>
    </citation>
    <scope>IDENTIFICATION BY MASS SPECTROMETRY [LARGE SCALE ANALYSIS]</scope>
</reference>
<reference key="16">
    <citation type="journal article" date="2016" name="Cell Rep.">
        <title>APEX Fingerprinting Reveals the Subcellular Localization of Proteins of Interest.</title>
        <authorList>
            <person name="Lee S.Y."/>
            <person name="Kang M.G."/>
            <person name="Park J.S."/>
            <person name="Lee G."/>
            <person name="Ting A.Y."/>
            <person name="Rhee H.W."/>
        </authorList>
    </citation>
    <scope>SUBCELLULAR LOCATION (ISOFORM 2)</scope>
</reference>
<proteinExistence type="evidence at protein level"/>
<name>ARM10_HUMAN</name>
<feature type="chain" id="PRO_0000297707" description="Armadillo repeat-containing protein 10">
    <location>
        <begin position="1"/>
        <end position="343"/>
    </location>
</feature>
<feature type="transmembrane region" description="Helical" evidence="2">
    <location>
        <begin position="5"/>
        <end position="27"/>
    </location>
</feature>
<feature type="repeat" description="ARM">
    <location>
        <begin position="138"/>
        <end position="180"/>
    </location>
</feature>
<feature type="region of interest" description="Disordered" evidence="3">
    <location>
        <begin position="43"/>
        <end position="83"/>
    </location>
</feature>
<feature type="compositionally biased region" description="Polar residues" evidence="3">
    <location>
        <begin position="64"/>
        <end position="82"/>
    </location>
</feature>
<feature type="modified residue" description="Phosphoserine" evidence="16">
    <location>
        <position position="45"/>
    </location>
</feature>
<feature type="modified residue" description="Phosphothreonine" evidence="1">
    <location>
        <position position="85"/>
    </location>
</feature>
<feature type="splice variant" id="VSP_027361" description="In isoform 2, isoform 4, isoform 5 and isoform 6." evidence="8 9 10">
    <location>
        <begin position="47"/>
        <end position="81"/>
    </location>
</feature>
<feature type="splice variant" id="VSP_027362" description="In isoform 3 and isoform 4." evidence="8">
    <location>
        <begin position="176"/>
        <end position="234"/>
    </location>
</feature>
<feature type="splice variant" id="VSP_047404" description="In isoform 6." evidence="11">
    <location>
        <begin position="177"/>
        <end position="259"/>
    </location>
</feature>
<feature type="splice variant" id="VSP_043290" description="In isoform 5." evidence="9">
    <location>
        <begin position="236"/>
        <end position="259"/>
    </location>
</feature>
<feature type="sequence variant" id="VAR_034681" description="In dbSNP:rs17849774." evidence="5">
    <original>P</original>
    <variation>S</variation>
    <location>
        <position position="190"/>
    </location>
</feature>
<feature type="sequence conflict" description="In Ref. 3; BAF84507." evidence="11" ref="3">
    <original>I</original>
    <variation>V</variation>
    <location>
        <position position="343"/>
    </location>
</feature>
<feature type="modified residue" description="Phosphoserine" evidence="12 13 14 15 17">
    <location sequence="Q8N2F6-2">
        <position position="45"/>
    </location>
</feature>
<feature type="modified residue" description="Phosphothreonine" evidence="14">
    <location sequence="Q8N2F6-2">
        <position position="50"/>
    </location>
</feature>
<feature type="modified residue" description="Phosphoserine" evidence="12 13 14 15 17">
    <location sequence="Q8N2F6-4">
        <position position="45"/>
    </location>
</feature>
<feature type="modified residue" description="Phosphothreonine" evidence="14">
    <location sequence="Q8N2F6-4">
        <position position="50"/>
    </location>
</feature>
<feature type="modified residue" description="Phosphoserine" evidence="12 13 14 15 17">
    <location sequence="Q8N2F6-5">
        <position position="45"/>
    </location>
</feature>
<feature type="modified residue" description="Phosphothreonine" evidence="14">
    <location sequence="Q8N2F6-5">
        <position position="50"/>
    </location>
</feature>
<feature type="modified residue" description="Phosphoserine" evidence="12 13 14 15 17">
    <location sequence="Q8N2F6-6">
        <position position="45"/>
    </location>
</feature>
<feature type="modified residue" description="Phosphothreonine" evidence="14">
    <location sequence="Q8N2F6-6">
        <position position="50"/>
    </location>
</feature>
<evidence type="ECO:0000250" key="1">
    <source>
        <dbReference type="UniProtKB" id="Q9D0L7"/>
    </source>
</evidence>
<evidence type="ECO:0000255" key="2"/>
<evidence type="ECO:0000256" key="3">
    <source>
        <dbReference type="SAM" id="MobiDB-lite"/>
    </source>
</evidence>
<evidence type="ECO:0000269" key="4">
    <source>
    </source>
</evidence>
<evidence type="ECO:0000269" key="5">
    <source>
    </source>
</evidence>
<evidence type="ECO:0000269" key="6">
    <source>
    </source>
</evidence>
<evidence type="ECO:0000269" key="7">
    <source>
    </source>
</evidence>
<evidence type="ECO:0000303" key="8">
    <source>
    </source>
</evidence>
<evidence type="ECO:0000303" key="9">
    <source>
    </source>
</evidence>
<evidence type="ECO:0000303" key="10">
    <source>
    </source>
</evidence>
<evidence type="ECO:0000305" key="11"/>
<evidence type="ECO:0007744" key="12">
    <source>
    </source>
</evidence>
<evidence type="ECO:0007744" key="13">
    <source>
    </source>
</evidence>
<evidence type="ECO:0007744" key="14">
    <source>
    </source>
</evidence>
<evidence type="ECO:0007744" key="15">
    <source>
    </source>
</evidence>
<evidence type="ECO:0007744" key="16">
    <source>
    </source>
</evidence>
<evidence type="ECO:0007744" key="17">
    <source>
    </source>
</evidence>
<accession>Q8N2F6</accession>
<accession>A8K703</accession>
<accession>B4DWJ8</accession>
<accession>F5GX65</accession>
<accession>Q75K91</accession>
<accession>Q75MG6</accession>
<accession>Q75ML8</accession>
<accession>Q8IZC1</accession>
<accession>Q8IZC2</accession>
<accession>Q8IZC3</accession>
<accession>Q9BTM6</accession>
<gene>
    <name type="primary">ARMC10</name>
    <name type="synonym">SVH</name>
    <name type="ORF">PSEC0198</name>
</gene>
<protein>
    <recommendedName>
        <fullName>Armadillo repeat-containing protein 10</fullName>
    </recommendedName>
    <alternativeName>
        <fullName>Splicing variant involved in hepatocarcinogenesis protein</fullName>
    </alternativeName>
</protein>
<keyword id="KW-0025">Alternative splicing</keyword>
<keyword id="KW-0903">Direct protein sequencing</keyword>
<keyword id="KW-0256">Endoplasmic reticulum</keyword>
<keyword id="KW-0341">Growth regulation</keyword>
<keyword id="KW-0472">Membrane</keyword>
<keyword id="KW-0496">Mitochondrion</keyword>
<keyword id="KW-1000">Mitochondrion outer membrane</keyword>
<keyword id="KW-0597">Phosphoprotein</keyword>
<keyword id="KW-1267">Proteomics identification</keyword>
<keyword id="KW-1185">Reference proteome</keyword>
<keyword id="KW-0812">Transmembrane</keyword>
<keyword id="KW-1133">Transmembrane helix</keyword>
<dbReference type="EMBL" id="AY150851">
    <property type="protein sequence ID" value="AAN72313.1"/>
    <property type="molecule type" value="mRNA"/>
</dbReference>
<dbReference type="EMBL" id="AY150852">
    <property type="protein sequence ID" value="AAN72314.1"/>
    <property type="molecule type" value="mRNA"/>
</dbReference>
<dbReference type="EMBL" id="AY150853">
    <property type="protein sequence ID" value="AAN72315.1"/>
    <property type="molecule type" value="mRNA"/>
</dbReference>
<dbReference type="EMBL" id="AY150854">
    <property type="protein sequence ID" value="AAN72316.1"/>
    <property type="molecule type" value="mRNA"/>
</dbReference>
<dbReference type="EMBL" id="AK075500">
    <property type="protein sequence ID" value="BAC11655.1"/>
    <property type="molecule type" value="mRNA"/>
</dbReference>
<dbReference type="EMBL" id="AK291818">
    <property type="protein sequence ID" value="BAF84507.1"/>
    <property type="molecule type" value="mRNA"/>
</dbReference>
<dbReference type="EMBL" id="AK301565">
    <property type="protein sequence ID" value="BAG63060.1"/>
    <property type="molecule type" value="mRNA"/>
</dbReference>
<dbReference type="EMBL" id="AC007683">
    <property type="protein sequence ID" value="AAS07531.1"/>
    <property type="molecule type" value="Genomic_DNA"/>
</dbReference>
<dbReference type="EMBL" id="AC073127">
    <property type="protein sequence ID" value="AAS07482.1"/>
    <property type="status" value="ALT_SEQ"/>
    <property type="molecule type" value="Genomic_DNA"/>
</dbReference>
<dbReference type="EMBL" id="AC108167">
    <property type="protein sequence ID" value="AAS07456.1"/>
    <property type="molecule type" value="Genomic_DNA"/>
</dbReference>
<dbReference type="EMBL" id="BC003586">
    <property type="protein sequence ID" value="AAH03586.1"/>
    <property type="molecule type" value="mRNA"/>
</dbReference>
<dbReference type="CCDS" id="CCDS55145.1">
    <molecule id="Q8N2F6-3"/>
</dbReference>
<dbReference type="CCDS" id="CCDS55146.1">
    <molecule id="Q8N2F6-2"/>
</dbReference>
<dbReference type="CCDS" id="CCDS55147.1">
    <molecule id="Q8N2F6-5"/>
</dbReference>
<dbReference type="CCDS" id="CCDS55148.1">
    <molecule id="Q8N2F6-4"/>
</dbReference>
<dbReference type="CCDS" id="CCDS55149.1">
    <molecule id="Q8N2F6-6"/>
</dbReference>
<dbReference type="CCDS" id="CCDS5728.1">
    <molecule id="Q8N2F6-1"/>
</dbReference>
<dbReference type="RefSeq" id="NP_001154481.1">
    <molecule id="Q8N2F6-2"/>
    <property type="nucleotide sequence ID" value="NM_001161009.3"/>
</dbReference>
<dbReference type="RefSeq" id="NP_001154482.1">
    <molecule id="Q8N2F6-3"/>
    <property type="nucleotide sequence ID" value="NM_001161010.3"/>
</dbReference>
<dbReference type="RefSeq" id="NP_001154483.1">
    <molecule id="Q8N2F6-5"/>
    <property type="nucleotide sequence ID" value="NM_001161011.3"/>
</dbReference>
<dbReference type="RefSeq" id="NP_001154484.1">
    <molecule id="Q8N2F6-4"/>
    <property type="nucleotide sequence ID" value="NM_001161012.3"/>
</dbReference>
<dbReference type="RefSeq" id="NP_001154485.1">
    <molecule id="Q8N2F6-6"/>
    <property type="nucleotide sequence ID" value="NM_001161013.3"/>
</dbReference>
<dbReference type="RefSeq" id="NP_114111.2">
    <molecule id="Q8N2F6-1"/>
    <property type="nucleotide sequence ID" value="NM_031905.4"/>
</dbReference>
<dbReference type="SMR" id="Q8N2F6"/>
<dbReference type="BioGRID" id="123762">
    <property type="interactions" value="39"/>
</dbReference>
<dbReference type="FunCoup" id="Q8N2F6">
    <property type="interactions" value="3008"/>
</dbReference>
<dbReference type="IntAct" id="Q8N2F6">
    <property type="interactions" value="17"/>
</dbReference>
<dbReference type="MINT" id="Q8N2F6"/>
<dbReference type="STRING" id="9606.ENSP00000319412"/>
<dbReference type="ChEMBL" id="CHEMBL5465331"/>
<dbReference type="GlyGen" id="Q8N2F6">
    <property type="glycosylation" value="1 site, 1 N-linked glycan (1 site)"/>
</dbReference>
<dbReference type="iPTMnet" id="Q8N2F6"/>
<dbReference type="PhosphoSitePlus" id="Q8N2F6"/>
<dbReference type="SwissPalm" id="Q8N2F6"/>
<dbReference type="BioMuta" id="ARMC10"/>
<dbReference type="DMDM" id="74714720"/>
<dbReference type="jPOST" id="Q8N2F6"/>
<dbReference type="MassIVE" id="Q8N2F6"/>
<dbReference type="PaxDb" id="9606-ENSP00000319412"/>
<dbReference type="PeptideAtlas" id="Q8N2F6"/>
<dbReference type="ProteomicsDB" id="24326"/>
<dbReference type="ProteomicsDB" id="71688">
    <molecule id="Q8N2F6-1"/>
</dbReference>
<dbReference type="ProteomicsDB" id="71689">
    <molecule id="Q8N2F6-2"/>
</dbReference>
<dbReference type="ProteomicsDB" id="71690">
    <molecule id="Q8N2F6-3"/>
</dbReference>
<dbReference type="ProteomicsDB" id="71691">
    <molecule id="Q8N2F6-4"/>
</dbReference>
<dbReference type="ProteomicsDB" id="71692">
    <molecule id="Q8N2F6-5"/>
</dbReference>
<dbReference type="Pumba" id="Q8N2F6"/>
<dbReference type="Antibodypedia" id="2627">
    <property type="antibodies" value="169 antibodies from 26 providers"/>
</dbReference>
<dbReference type="DNASU" id="83787"/>
<dbReference type="Ensembl" id="ENST00000323716.8">
    <molecule id="Q8N2F6-1"/>
    <property type="protein sequence ID" value="ENSP00000319412.3"/>
    <property type="gene ID" value="ENSG00000170632.14"/>
</dbReference>
<dbReference type="Ensembl" id="ENST00000425331.5">
    <molecule id="Q8N2F6-5"/>
    <property type="protein sequence ID" value="ENSP00000397969.1"/>
    <property type="gene ID" value="ENSG00000170632.14"/>
</dbReference>
<dbReference type="Ensembl" id="ENST00000428183.6">
    <molecule id="Q8N2F6-3"/>
    <property type="protein sequence ID" value="ENSP00000396654.2"/>
    <property type="gene ID" value="ENSG00000170632.14"/>
</dbReference>
<dbReference type="Ensembl" id="ENST00000441711.6">
    <molecule id="Q8N2F6-2"/>
    <property type="protein sequence ID" value="ENSP00000413619.2"/>
    <property type="gene ID" value="ENSG00000170632.14"/>
</dbReference>
<dbReference type="Ensembl" id="ENST00000454559.5">
    <molecule id="Q8N2F6-4"/>
    <property type="protein sequence ID" value="ENSP00000405612.1"/>
    <property type="gene ID" value="ENSG00000170632.14"/>
</dbReference>
<dbReference type="Ensembl" id="ENST00000541300.5">
    <molecule id="Q8N2F6-6"/>
    <property type="protein sequence ID" value="ENSP00000440463.1"/>
    <property type="gene ID" value="ENSG00000170632.14"/>
</dbReference>
<dbReference type="GeneID" id="83787"/>
<dbReference type="KEGG" id="hsa:83787"/>
<dbReference type="MANE-Select" id="ENST00000323716.8">
    <property type="protein sequence ID" value="ENSP00000319412.3"/>
    <property type="RefSeq nucleotide sequence ID" value="NM_031905.5"/>
    <property type="RefSeq protein sequence ID" value="NP_114111.2"/>
</dbReference>
<dbReference type="UCSC" id="uc003vaw.3">
    <molecule id="Q8N2F6-1"/>
    <property type="organism name" value="human"/>
</dbReference>
<dbReference type="AGR" id="HGNC:21706"/>
<dbReference type="CTD" id="83787"/>
<dbReference type="GeneCards" id="ARMC10"/>
<dbReference type="HGNC" id="HGNC:21706">
    <property type="gene designation" value="ARMC10"/>
</dbReference>
<dbReference type="HPA" id="ENSG00000170632">
    <property type="expression patterns" value="Low tissue specificity"/>
</dbReference>
<dbReference type="MIM" id="611864">
    <property type="type" value="gene"/>
</dbReference>
<dbReference type="neXtProt" id="NX_Q8N2F6"/>
<dbReference type="OpenTargets" id="ENSG00000170632"/>
<dbReference type="PharmGKB" id="PA162376895"/>
<dbReference type="VEuPathDB" id="HostDB:ENSG00000170632"/>
<dbReference type="eggNOG" id="ENOG502RZRU">
    <property type="taxonomic scope" value="Eukaryota"/>
</dbReference>
<dbReference type="GeneTree" id="ENSGT00940000159546"/>
<dbReference type="HOGENOM" id="CLU_037187_0_0_1"/>
<dbReference type="InParanoid" id="Q8N2F6"/>
<dbReference type="OMA" id="VTNDYHY"/>
<dbReference type="OrthoDB" id="10017790at2759"/>
<dbReference type="PAN-GO" id="Q8N2F6">
    <property type="GO annotations" value="2 GO annotations based on evolutionary models"/>
</dbReference>
<dbReference type="PhylomeDB" id="Q8N2F6"/>
<dbReference type="TreeFam" id="TF335652"/>
<dbReference type="PathwayCommons" id="Q8N2F6"/>
<dbReference type="SignaLink" id="Q8N2F6"/>
<dbReference type="SIGNOR" id="Q8N2F6"/>
<dbReference type="BioGRID-ORCS" id="83787">
    <property type="hits" value="53 hits in 1120 CRISPR screens"/>
</dbReference>
<dbReference type="ChiTaRS" id="ARMC10">
    <property type="organism name" value="human"/>
</dbReference>
<dbReference type="GenomeRNAi" id="83787"/>
<dbReference type="Pharos" id="Q8N2F6">
    <property type="development level" value="Tbio"/>
</dbReference>
<dbReference type="PRO" id="PR:Q8N2F6"/>
<dbReference type="Proteomes" id="UP000005640">
    <property type="component" value="Chromosome 7"/>
</dbReference>
<dbReference type="RNAct" id="Q8N2F6">
    <property type="molecule type" value="protein"/>
</dbReference>
<dbReference type="Bgee" id="ENSG00000170632">
    <property type="expression patterns" value="Expressed in prefrontal cortex and 106 other cell types or tissues"/>
</dbReference>
<dbReference type="ExpressionAtlas" id="Q8N2F6">
    <property type="expression patterns" value="baseline and differential"/>
</dbReference>
<dbReference type="GO" id="GO:0005783">
    <property type="term" value="C:endoplasmic reticulum"/>
    <property type="evidence" value="ECO:0000314"/>
    <property type="project" value="UniProtKB"/>
</dbReference>
<dbReference type="GO" id="GO:0005789">
    <property type="term" value="C:endoplasmic reticulum membrane"/>
    <property type="evidence" value="ECO:0007669"/>
    <property type="project" value="UniProtKB-SubCell"/>
</dbReference>
<dbReference type="GO" id="GO:0005741">
    <property type="term" value="C:mitochondrial outer membrane"/>
    <property type="evidence" value="ECO:0007669"/>
    <property type="project" value="UniProtKB-SubCell"/>
</dbReference>
<dbReference type="GO" id="GO:0005739">
    <property type="term" value="C:mitochondrion"/>
    <property type="evidence" value="ECO:0000314"/>
    <property type="project" value="HPA"/>
</dbReference>
<dbReference type="GO" id="GO:0050692">
    <property type="term" value="F:DNA binding domain binding"/>
    <property type="evidence" value="ECO:0000314"/>
    <property type="project" value="UniProtKB"/>
</dbReference>
<dbReference type="GO" id="GO:0002039">
    <property type="term" value="F:p53 binding"/>
    <property type="evidence" value="ECO:0000353"/>
    <property type="project" value="UniProtKB"/>
</dbReference>
<dbReference type="GO" id="GO:0043066">
    <property type="term" value="P:negative regulation of apoptotic process"/>
    <property type="evidence" value="ECO:0000314"/>
    <property type="project" value="UniProtKB"/>
</dbReference>
<dbReference type="GO" id="GO:1902254">
    <property type="term" value="P:negative regulation of intrinsic apoptotic signaling pathway by p53 class mediator"/>
    <property type="evidence" value="ECO:0000315"/>
    <property type="project" value="UniProtKB"/>
</dbReference>
<dbReference type="GO" id="GO:0040010">
    <property type="term" value="P:positive regulation of growth rate"/>
    <property type="evidence" value="ECO:0000314"/>
    <property type="project" value="UniProtKB"/>
</dbReference>
<dbReference type="FunFam" id="1.25.10.10:FF:000328">
    <property type="entry name" value="Armadillo repeat containing 10"/>
    <property type="match status" value="1"/>
</dbReference>
<dbReference type="FunFam" id="1.25.10.10:FF:000443">
    <property type="entry name" value="Armadillo repeat-containing protein 10"/>
    <property type="match status" value="1"/>
</dbReference>
<dbReference type="Gene3D" id="1.25.10.10">
    <property type="entry name" value="Leucine-rich Repeat Variant"/>
    <property type="match status" value="2"/>
</dbReference>
<dbReference type="InterPro" id="IPR011989">
    <property type="entry name" value="ARM-like"/>
</dbReference>
<dbReference type="InterPro" id="IPR006911">
    <property type="entry name" value="ARM-rpt_dom"/>
</dbReference>
<dbReference type="InterPro" id="IPR016024">
    <property type="entry name" value="ARM-type_fold"/>
</dbReference>
<dbReference type="InterPro" id="IPR051303">
    <property type="entry name" value="Armcx_regulator"/>
</dbReference>
<dbReference type="PANTHER" id="PTHR15712">
    <property type="entry name" value="ARMADILLO REPEAT CONTAINING PROTEIN"/>
    <property type="match status" value="1"/>
</dbReference>
<dbReference type="PANTHER" id="PTHR15712:SF19">
    <property type="entry name" value="ARMADILLO REPEAT-CONTAINING PROTEIN 10"/>
    <property type="match status" value="1"/>
</dbReference>
<dbReference type="Pfam" id="PF04826">
    <property type="entry name" value="Arm_2"/>
    <property type="match status" value="1"/>
</dbReference>
<dbReference type="SUPFAM" id="SSF48371">
    <property type="entry name" value="ARM repeat"/>
    <property type="match status" value="1"/>
</dbReference>
<organism>
    <name type="scientific">Homo sapiens</name>
    <name type="common">Human</name>
    <dbReference type="NCBI Taxonomy" id="9606"/>
    <lineage>
        <taxon>Eukaryota</taxon>
        <taxon>Metazoa</taxon>
        <taxon>Chordata</taxon>
        <taxon>Craniata</taxon>
        <taxon>Vertebrata</taxon>
        <taxon>Euteleostomi</taxon>
        <taxon>Mammalia</taxon>
        <taxon>Eutheria</taxon>
        <taxon>Euarchontoglires</taxon>
        <taxon>Primates</taxon>
        <taxon>Haplorrhini</taxon>
        <taxon>Catarrhini</taxon>
        <taxon>Hominidae</taxon>
        <taxon>Homo</taxon>
    </lineage>
</organism>
<comment type="function">
    <text evidence="4 6">May play a role in cell survival and cell growth. May suppress the transcriptional activity of p53/TP53.</text>
</comment>
<comment type="subunit">
    <text evidence="6">Interacts with the DNA-binding domain of p53/TP53.</text>
</comment>
<comment type="interaction">
    <interactant intactId="EBI-12902762">
        <id>Q8N2F6-2</id>
    </interactant>
    <interactant intactId="EBI-12188723">
        <id>Q96L46</id>
        <label>CAPNS2</label>
    </interactant>
    <organismsDiffer>false</organismsDiffer>
    <experiments>3</experiments>
</comment>
<comment type="interaction">
    <interactant intactId="EBI-12902762">
        <id>Q8N2F6-2</id>
    </interactant>
    <interactant intactId="EBI-14240149">
        <id>B3EWG3</id>
        <label>FAM25A</label>
    </interactant>
    <organismsDiffer>false</organismsDiffer>
    <experiments>5</experiments>
</comment>
<comment type="interaction">
    <interactant intactId="EBI-12902762">
        <id>Q8N2F6-2</id>
    </interactant>
    <interactant intactId="EBI-358489">
        <id>Q96GM5</id>
        <label>SMARCD1</label>
    </interactant>
    <organismsDiffer>false</organismsDiffer>
    <experiments>3</experiments>
</comment>
<comment type="interaction">
    <interactant intactId="EBI-12902762">
        <id>Q8N2F6-2</id>
    </interactant>
    <interactant intactId="EBI-710310">
        <id>Q15560</id>
        <label>TCEA2</label>
    </interactant>
    <organismsDiffer>false</organismsDiffer>
    <experiments>3</experiments>
</comment>
<comment type="subcellular location">
    <subcellularLocation>
        <location evidence="4">Endoplasmic reticulum membrane</location>
        <topology evidence="2">Single-pass membrane protein</topology>
    </subcellularLocation>
</comment>
<comment type="subcellular location">
    <molecule>Isoform 2</molecule>
    <subcellularLocation>
        <location evidence="7">Mitochondrion outer membrane</location>
        <topology evidence="2">Single-pass membrane protein</topology>
    </subcellularLocation>
</comment>
<comment type="alternative products">
    <event type="alternative splicing"/>
    <isoform>
        <id>Q8N2F6-1</id>
        <name>1</name>
        <name>SVH-A</name>
        <sequence type="displayed"/>
    </isoform>
    <isoform>
        <id>Q8N2F6-2</id>
        <name>2</name>
        <name>SVH-B</name>
        <sequence type="described" ref="VSP_027361"/>
    </isoform>
    <isoform>
        <id>Q8N2F6-3</id>
        <name>3</name>
        <name>SVH-C</name>
        <sequence type="described" ref="VSP_027362"/>
    </isoform>
    <isoform>
        <id>Q8N2F6-4</id>
        <name>4</name>
        <name>SVH-D</name>
        <sequence type="described" ref="VSP_027361 VSP_027362"/>
    </isoform>
    <isoform>
        <id>Q8N2F6-5</id>
        <name>5</name>
        <sequence type="described" ref="VSP_027361 VSP_043290"/>
    </isoform>
    <isoform>
        <id>Q8N2F6-6</id>
        <name>6</name>
        <sequence type="described" ref="VSP_027361 VSP_047404"/>
    </isoform>
</comment>
<comment type="tissue specificity">
    <text evidence="4">Expressed in all tissues tested with higher expression in placenta, liver, kidney, heart and brain.</text>
</comment>
<comment type="miscellaneous">
    <text>Depletion of isoform 2 results in cell apoptosis while its overexpression in cells leads to accelerated growth rate and tumorogenicity.</text>
</comment>
<comment type="sequence caution" evidence="11">
    <conflict type="erroneous gene model prediction">
        <sequence resource="EMBL-CDS" id="AAS07482"/>
    </conflict>
</comment>